<organism>
    <name type="scientific">Saccharolobus islandicus (strain M.16.27)</name>
    <name type="common">Sulfolobus islandicus</name>
    <dbReference type="NCBI Taxonomy" id="427318"/>
    <lineage>
        <taxon>Archaea</taxon>
        <taxon>Thermoproteota</taxon>
        <taxon>Thermoprotei</taxon>
        <taxon>Sulfolobales</taxon>
        <taxon>Sulfolobaceae</taxon>
        <taxon>Saccharolobus</taxon>
    </lineage>
</organism>
<gene>
    <name evidence="1" type="primary">fni</name>
    <name type="ordered locus">M1627_2137</name>
</gene>
<dbReference type="EC" id="5.3.3.2" evidence="1"/>
<dbReference type="EMBL" id="CP001401">
    <property type="protein sequence ID" value="ACP56003.1"/>
    <property type="molecule type" value="Genomic_DNA"/>
</dbReference>
<dbReference type="RefSeq" id="WP_012719032.1">
    <property type="nucleotide sequence ID" value="NC_012632.1"/>
</dbReference>
<dbReference type="SMR" id="C3N063"/>
<dbReference type="GeneID" id="84059408"/>
<dbReference type="KEGG" id="sim:M1627_2137"/>
<dbReference type="HOGENOM" id="CLU_065515_1_0_2"/>
<dbReference type="Proteomes" id="UP000002307">
    <property type="component" value="Chromosome"/>
</dbReference>
<dbReference type="GO" id="GO:0005737">
    <property type="term" value="C:cytoplasm"/>
    <property type="evidence" value="ECO:0007669"/>
    <property type="project" value="UniProtKB-SubCell"/>
</dbReference>
<dbReference type="GO" id="GO:0010181">
    <property type="term" value="F:FMN binding"/>
    <property type="evidence" value="ECO:0007669"/>
    <property type="project" value="UniProtKB-UniRule"/>
</dbReference>
<dbReference type="GO" id="GO:0004452">
    <property type="term" value="F:isopentenyl-diphosphate delta-isomerase activity"/>
    <property type="evidence" value="ECO:0007669"/>
    <property type="project" value="UniProtKB-UniRule"/>
</dbReference>
<dbReference type="GO" id="GO:0000287">
    <property type="term" value="F:magnesium ion binding"/>
    <property type="evidence" value="ECO:0007669"/>
    <property type="project" value="UniProtKB-UniRule"/>
</dbReference>
<dbReference type="GO" id="GO:0070402">
    <property type="term" value="F:NADPH binding"/>
    <property type="evidence" value="ECO:0007669"/>
    <property type="project" value="UniProtKB-UniRule"/>
</dbReference>
<dbReference type="GO" id="GO:0016491">
    <property type="term" value="F:oxidoreductase activity"/>
    <property type="evidence" value="ECO:0007669"/>
    <property type="project" value="InterPro"/>
</dbReference>
<dbReference type="GO" id="GO:0008299">
    <property type="term" value="P:isoprenoid biosynthetic process"/>
    <property type="evidence" value="ECO:0007669"/>
    <property type="project" value="UniProtKB-UniRule"/>
</dbReference>
<dbReference type="CDD" id="cd02811">
    <property type="entry name" value="IDI-2_FMN"/>
    <property type="match status" value="1"/>
</dbReference>
<dbReference type="FunFam" id="3.20.20.70:FF:000258">
    <property type="entry name" value="Isopentenyl-diphosphate delta-isomerase"/>
    <property type="match status" value="1"/>
</dbReference>
<dbReference type="Gene3D" id="3.20.20.70">
    <property type="entry name" value="Aldolase class I"/>
    <property type="match status" value="1"/>
</dbReference>
<dbReference type="HAMAP" id="MF_00354">
    <property type="entry name" value="Idi_2"/>
    <property type="match status" value="1"/>
</dbReference>
<dbReference type="InterPro" id="IPR013785">
    <property type="entry name" value="Aldolase_TIM"/>
</dbReference>
<dbReference type="InterPro" id="IPR000262">
    <property type="entry name" value="FMN-dep_DH"/>
</dbReference>
<dbReference type="InterPro" id="IPR011179">
    <property type="entry name" value="IPdP_isomerase"/>
</dbReference>
<dbReference type="NCBIfam" id="TIGR02151">
    <property type="entry name" value="IPP_isom_2"/>
    <property type="match status" value="1"/>
</dbReference>
<dbReference type="PANTHER" id="PTHR43665">
    <property type="entry name" value="ISOPENTENYL-DIPHOSPHATE DELTA-ISOMERASE"/>
    <property type="match status" value="1"/>
</dbReference>
<dbReference type="PANTHER" id="PTHR43665:SF1">
    <property type="entry name" value="ISOPENTENYL-DIPHOSPHATE DELTA-ISOMERASE"/>
    <property type="match status" value="1"/>
</dbReference>
<dbReference type="Pfam" id="PF01070">
    <property type="entry name" value="FMN_dh"/>
    <property type="match status" value="1"/>
</dbReference>
<dbReference type="PIRSF" id="PIRSF003314">
    <property type="entry name" value="IPP_isomerase"/>
    <property type="match status" value="1"/>
</dbReference>
<dbReference type="SMART" id="SM01240">
    <property type="entry name" value="IMPDH"/>
    <property type="match status" value="1"/>
</dbReference>
<dbReference type="SUPFAM" id="SSF51395">
    <property type="entry name" value="FMN-linked oxidoreductases"/>
    <property type="match status" value="1"/>
</dbReference>
<reference key="1">
    <citation type="journal article" date="2009" name="Proc. Natl. Acad. Sci. U.S.A.">
        <title>Biogeography of the Sulfolobus islandicus pan-genome.</title>
        <authorList>
            <person name="Reno M.L."/>
            <person name="Held N.L."/>
            <person name="Fields C.J."/>
            <person name="Burke P.V."/>
            <person name="Whitaker R.J."/>
        </authorList>
    </citation>
    <scope>NUCLEOTIDE SEQUENCE [LARGE SCALE GENOMIC DNA]</scope>
    <source>
        <strain>M.16.27</strain>
    </source>
</reference>
<evidence type="ECO:0000255" key="1">
    <source>
        <dbReference type="HAMAP-Rule" id="MF_00354"/>
    </source>
</evidence>
<accession>C3N063</accession>
<comment type="function">
    <text evidence="1">Involved in the biosynthesis of isoprenoids. Catalyzes the 1,3-allylic rearrangement of the homoallylic substrate isopentenyl (IPP) to its allylic isomer, dimethylallyl diphosphate (DMAPP).</text>
</comment>
<comment type="catalytic activity">
    <reaction evidence="1">
        <text>isopentenyl diphosphate = dimethylallyl diphosphate</text>
        <dbReference type="Rhea" id="RHEA:23284"/>
        <dbReference type="ChEBI" id="CHEBI:57623"/>
        <dbReference type="ChEBI" id="CHEBI:128769"/>
        <dbReference type="EC" id="5.3.3.2"/>
    </reaction>
</comment>
<comment type="cofactor">
    <cofactor evidence="1">
        <name>FMN</name>
        <dbReference type="ChEBI" id="CHEBI:58210"/>
    </cofactor>
</comment>
<comment type="cofactor">
    <cofactor evidence="1">
        <name>NADPH</name>
        <dbReference type="ChEBI" id="CHEBI:57783"/>
    </cofactor>
</comment>
<comment type="cofactor">
    <cofactor evidence="1">
        <name>Mg(2+)</name>
        <dbReference type="ChEBI" id="CHEBI:18420"/>
    </cofactor>
</comment>
<comment type="subunit">
    <text evidence="1">Homooctamer. Dimer of tetramers.</text>
</comment>
<comment type="subcellular location">
    <subcellularLocation>
        <location evidence="1">Cytoplasm</location>
    </subcellularLocation>
</comment>
<comment type="similarity">
    <text evidence="1">Belongs to the IPP isomerase type 2 family.</text>
</comment>
<keyword id="KW-0963">Cytoplasm</keyword>
<keyword id="KW-0285">Flavoprotein</keyword>
<keyword id="KW-0288">FMN</keyword>
<keyword id="KW-0413">Isomerase</keyword>
<keyword id="KW-0414">Isoprene biosynthesis</keyword>
<keyword id="KW-0460">Magnesium</keyword>
<keyword id="KW-0479">Metal-binding</keyword>
<keyword id="KW-0521">NADP</keyword>
<feature type="chain" id="PRO_1000205353" description="Isopentenyl-diphosphate delta-isomerase">
    <location>
        <begin position="1"/>
        <end position="368"/>
    </location>
</feature>
<feature type="binding site" evidence="1">
    <location>
        <begin position="7"/>
        <end position="8"/>
    </location>
    <ligand>
        <name>substrate</name>
    </ligand>
</feature>
<feature type="binding site" evidence="1">
    <location>
        <position position="65"/>
    </location>
    <ligand>
        <name>FMN</name>
        <dbReference type="ChEBI" id="CHEBI:58210"/>
    </ligand>
</feature>
<feature type="binding site" evidence="1">
    <location>
        <begin position="66"/>
        <end position="68"/>
    </location>
    <ligand>
        <name>FMN</name>
        <dbReference type="ChEBI" id="CHEBI:58210"/>
    </ligand>
</feature>
<feature type="binding site" evidence="1">
    <location>
        <begin position="96"/>
        <end position="98"/>
    </location>
    <ligand>
        <name>substrate</name>
    </ligand>
</feature>
<feature type="binding site" evidence="1">
    <location>
        <position position="96"/>
    </location>
    <ligand>
        <name>FMN</name>
        <dbReference type="ChEBI" id="CHEBI:58210"/>
    </ligand>
</feature>
<feature type="binding site" evidence="1">
    <location>
        <position position="125"/>
    </location>
    <ligand>
        <name>FMN</name>
        <dbReference type="ChEBI" id="CHEBI:58210"/>
    </ligand>
</feature>
<feature type="binding site" evidence="1">
    <location>
        <position position="160"/>
    </location>
    <ligand>
        <name>substrate</name>
    </ligand>
</feature>
<feature type="binding site" evidence="1">
    <location>
        <position position="161"/>
    </location>
    <ligand>
        <name>Mg(2+)</name>
        <dbReference type="ChEBI" id="CHEBI:18420"/>
    </ligand>
</feature>
<feature type="binding site" evidence="1">
    <location>
        <position position="193"/>
    </location>
    <ligand>
        <name>FMN</name>
        <dbReference type="ChEBI" id="CHEBI:58210"/>
    </ligand>
</feature>
<feature type="binding site" evidence="1">
    <location>
        <position position="218"/>
    </location>
    <ligand>
        <name>FMN</name>
        <dbReference type="ChEBI" id="CHEBI:58210"/>
    </ligand>
</feature>
<feature type="binding site" evidence="1">
    <location>
        <position position="223"/>
    </location>
    <ligand>
        <name>FMN</name>
        <dbReference type="ChEBI" id="CHEBI:58210"/>
    </ligand>
</feature>
<feature type="binding site" evidence="1">
    <location>
        <begin position="275"/>
        <end position="277"/>
    </location>
    <ligand>
        <name>FMN</name>
        <dbReference type="ChEBI" id="CHEBI:58210"/>
    </ligand>
</feature>
<feature type="binding site" evidence="1">
    <location>
        <begin position="296"/>
        <end position="297"/>
    </location>
    <ligand>
        <name>FMN</name>
        <dbReference type="ChEBI" id="CHEBI:58210"/>
    </ligand>
</feature>
<sequence>MPDIVNRKVEHVEIAAFENVDGLSSSTFLNDVILVHQGFPGISFSEINTKTKFFRKEISVPIMVTGMTGGRNELGRINKIIAEVTEKFGIPMGVGSQRVAIEKAEARESFAIVRKVAPTIPIIANLGMPQLVKGYGLKEFQDAIQMIEADAIAVHLNPAQEVFQPEGEPEYQIYALEKLRDISKELSVPIIVKESGNGISMETAKLLYSYGIKNFDTSGQGGTNWIAIEMIRDIRRGNWKAESAKNFLNWGVPTAASIMEVRYSVPDSFLVGSGGIRSGLDAAKAIALGADIAGMALPVLKSAIEGKESLEQFFRKIIFELKAAMMLTGSKDVNALKKTSIVILGKLKEWAEYRGINLSTYDKVRKRE</sequence>
<name>IDI2_SACI3</name>
<proteinExistence type="inferred from homology"/>
<protein>
    <recommendedName>
        <fullName evidence="1">Isopentenyl-diphosphate delta-isomerase</fullName>
        <shortName evidence="1">IPP isomerase</shortName>
        <ecNumber evidence="1">5.3.3.2</ecNumber>
    </recommendedName>
    <alternativeName>
        <fullName evidence="1">Isopentenyl diphosphate:dimethylallyl diphosphate isomerase</fullName>
    </alternativeName>
    <alternativeName>
        <fullName evidence="1">Isopentenyl pyrophosphate isomerase</fullName>
    </alternativeName>
    <alternativeName>
        <fullName evidence="1">Type 2 isopentenyl diphosphate isomerase</fullName>
        <shortName evidence="1">IDI-2</shortName>
    </alternativeName>
</protein>